<organism>
    <name type="scientific">Tyrannophasma gladiator</name>
    <name type="common">Gladiator</name>
    <name type="synonym">Heel-walker</name>
    <dbReference type="NCBI Taxonomy" id="270861"/>
    <lineage>
        <taxon>Eukaryota</taxon>
        <taxon>Metazoa</taxon>
        <taxon>Ecdysozoa</taxon>
        <taxon>Arthropoda</taxon>
        <taxon>Hexapoda</taxon>
        <taxon>Insecta</taxon>
        <taxon>Pterygota</taxon>
        <taxon>Neoptera</taxon>
        <taxon>Polyneoptera</taxon>
        <taxon>Mantophasmatodea</taxon>
        <taxon>Mantophasmatodea incertae sedis</taxon>
        <taxon>Tyrannophasma</taxon>
    </lineage>
</organism>
<feature type="peptide" id="PRO_0000421709" description="Corazonin" evidence="3">
    <location>
        <begin position="1"/>
        <end position="11"/>
    </location>
</feature>
<feature type="modified residue" description="Pyrrolidone carboxylic acid" evidence="3">
    <location>
        <position position="1"/>
    </location>
</feature>
<feature type="modified residue" description="Asparagine amide" evidence="3">
    <location>
        <position position="11"/>
    </location>
</feature>
<name>CORZ_TYRGL</name>
<protein>
    <recommendedName>
        <fullName evidence="4">Corazonin</fullName>
    </recommendedName>
</protein>
<reference evidence="5" key="1">
    <citation type="journal article" date="2012" name="Syst. Biol.">
        <title>Peptidomics-based phylogeny and biogeography of Mantophasmatodea (Hexapoda).</title>
        <authorList>
            <person name="Predel R."/>
            <person name="Neupert S."/>
            <person name="Huetteroth W."/>
            <person name="Kahnt J."/>
            <person name="Waidelich D."/>
            <person name="Roth S."/>
        </authorList>
    </citation>
    <scope>PROTEIN SEQUENCE</scope>
    <scope>PYROGLUTAMATE FORMATION AT GLN-1</scope>
    <scope>AMIDATION AT ASN-11</scope>
    <source>
        <tissue evidence="3">Corpora cardiaca</tissue>
    </source>
</reference>
<proteinExistence type="evidence at protein level"/>
<sequence>QTFQYSRGWTN</sequence>
<keyword id="KW-0027">Amidation</keyword>
<keyword id="KW-0903">Direct protein sequencing</keyword>
<keyword id="KW-0527">Neuropeptide</keyword>
<keyword id="KW-0873">Pyrrolidone carboxylic acid</keyword>
<keyword id="KW-0964">Secreted</keyword>
<accession>B3A0J2</accession>
<evidence type="ECO:0000250" key="1">
    <source>
        <dbReference type="UniProtKB" id="Q26377"/>
    </source>
</evidence>
<evidence type="ECO:0000255" key="2"/>
<evidence type="ECO:0000269" key="3">
    <source>
    </source>
</evidence>
<evidence type="ECO:0000303" key="4">
    <source>
    </source>
</evidence>
<evidence type="ECO:0000305" key="5"/>
<evidence type="ECO:0000305" key="6">
    <source>
    </source>
</evidence>
<dbReference type="GO" id="GO:0005576">
    <property type="term" value="C:extracellular region"/>
    <property type="evidence" value="ECO:0007669"/>
    <property type="project" value="UniProtKB-SubCell"/>
</dbReference>
<dbReference type="GO" id="GO:0007218">
    <property type="term" value="P:neuropeptide signaling pathway"/>
    <property type="evidence" value="ECO:0007669"/>
    <property type="project" value="UniProtKB-KW"/>
</dbReference>
<comment type="function">
    <text evidence="1">Cardioactive peptide. Corazonin is probably involved in the physiological regulation of the heart beat (By similarity).</text>
</comment>
<comment type="subcellular location">
    <subcellularLocation>
        <location evidence="6">Secreted</location>
    </subcellularLocation>
</comment>
<comment type="similarity">
    <text evidence="2">Belongs to the corazonin family.</text>
</comment>